<evidence type="ECO:0000255" key="1">
    <source>
        <dbReference type="HAMAP-Rule" id="MF_01367"/>
    </source>
</evidence>
<evidence type="ECO:0000305" key="2"/>
<accession>Q03ZN5</accession>
<protein>
    <recommendedName>
        <fullName evidence="1">Large ribosomal subunit protein uL14</fullName>
    </recommendedName>
    <alternativeName>
        <fullName evidence="2">50S ribosomal protein L14</fullName>
    </alternativeName>
</protein>
<reference key="1">
    <citation type="journal article" date="2006" name="Proc. Natl. Acad. Sci. U.S.A.">
        <title>Comparative genomics of the lactic acid bacteria.</title>
        <authorList>
            <person name="Makarova K.S."/>
            <person name="Slesarev A."/>
            <person name="Wolf Y.I."/>
            <person name="Sorokin A."/>
            <person name="Mirkin B."/>
            <person name="Koonin E.V."/>
            <person name="Pavlov A."/>
            <person name="Pavlova N."/>
            <person name="Karamychev V."/>
            <person name="Polouchine N."/>
            <person name="Shakhova V."/>
            <person name="Grigoriev I."/>
            <person name="Lou Y."/>
            <person name="Rohksar D."/>
            <person name="Lucas S."/>
            <person name="Huang K."/>
            <person name="Goodstein D.M."/>
            <person name="Hawkins T."/>
            <person name="Plengvidhya V."/>
            <person name="Welker D."/>
            <person name="Hughes J."/>
            <person name="Goh Y."/>
            <person name="Benson A."/>
            <person name="Baldwin K."/>
            <person name="Lee J.-H."/>
            <person name="Diaz-Muniz I."/>
            <person name="Dosti B."/>
            <person name="Smeianov V."/>
            <person name="Wechter W."/>
            <person name="Barabote R."/>
            <person name="Lorca G."/>
            <person name="Altermann E."/>
            <person name="Barrangou R."/>
            <person name="Ganesan B."/>
            <person name="Xie Y."/>
            <person name="Rawsthorne H."/>
            <person name="Tamir D."/>
            <person name="Parker C."/>
            <person name="Breidt F."/>
            <person name="Broadbent J.R."/>
            <person name="Hutkins R."/>
            <person name="O'Sullivan D."/>
            <person name="Steele J."/>
            <person name="Unlu G."/>
            <person name="Saier M.H. Jr."/>
            <person name="Klaenhammer T."/>
            <person name="Richardson P."/>
            <person name="Kozyavkin S."/>
            <person name="Weimer B.C."/>
            <person name="Mills D.A."/>
        </authorList>
    </citation>
    <scope>NUCLEOTIDE SEQUENCE [LARGE SCALE GENOMIC DNA]</scope>
    <source>
        <strain>ATCC 8293 / DSM 20343 / BCRC 11652 / CCM 1803 / JCM 6124 / NCDO 523 / NBRC 100496 / NCIMB 8023 / NCTC 12954 / NRRL B-1118 / 37Y</strain>
    </source>
</reference>
<feature type="chain" id="PRO_1000055619" description="Large ribosomal subunit protein uL14">
    <location>
        <begin position="1"/>
        <end position="122"/>
    </location>
</feature>
<dbReference type="EMBL" id="CP000414">
    <property type="protein sequence ID" value="ABJ61337.1"/>
    <property type="molecule type" value="Genomic_DNA"/>
</dbReference>
<dbReference type="RefSeq" id="WP_002816026.1">
    <property type="nucleotide sequence ID" value="NC_008531.1"/>
</dbReference>
<dbReference type="SMR" id="Q03ZN5"/>
<dbReference type="EnsemblBacteria" id="ABJ61337">
    <property type="protein sequence ID" value="ABJ61337"/>
    <property type="gene ID" value="LEUM_0206"/>
</dbReference>
<dbReference type="GeneID" id="97504971"/>
<dbReference type="KEGG" id="lme:LEUM_0206"/>
<dbReference type="eggNOG" id="COG0093">
    <property type="taxonomic scope" value="Bacteria"/>
</dbReference>
<dbReference type="HOGENOM" id="CLU_095071_2_1_9"/>
<dbReference type="Proteomes" id="UP000000362">
    <property type="component" value="Chromosome"/>
</dbReference>
<dbReference type="GO" id="GO:0022625">
    <property type="term" value="C:cytosolic large ribosomal subunit"/>
    <property type="evidence" value="ECO:0007669"/>
    <property type="project" value="TreeGrafter"/>
</dbReference>
<dbReference type="GO" id="GO:0070180">
    <property type="term" value="F:large ribosomal subunit rRNA binding"/>
    <property type="evidence" value="ECO:0007669"/>
    <property type="project" value="TreeGrafter"/>
</dbReference>
<dbReference type="GO" id="GO:0003735">
    <property type="term" value="F:structural constituent of ribosome"/>
    <property type="evidence" value="ECO:0007669"/>
    <property type="project" value="InterPro"/>
</dbReference>
<dbReference type="GO" id="GO:0006412">
    <property type="term" value="P:translation"/>
    <property type="evidence" value="ECO:0007669"/>
    <property type="project" value="UniProtKB-UniRule"/>
</dbReference>
<dbReference type="CDD" id="cd00337">
    <property type="entry name" value="Ribosomal_uL14"/>
    <property type="match status" value="1"/>
</dbReference>
<dbReference type="FunFam" id="2.40.150.20:FF:000001">
    <property type="entry name" value="50S ribosomal protein L14"/>
    <property type="match status" value="1"/>
</dbReference>
<dbReference type="Gene3D" id="2.40.150.20">
    <property type="entry name" value="Ribosomal protein L14"/>
    <property type="match status" value="1"/>
</dbReference>
<dbReference type="HAMAP" id="MF_01367">
    <property type="entry name" value="Ribosomal_uL14"/>
    <property type="match status" value="1"/>
</dbReference>
<dbReference type="InterPro" id="IPR000218">
    <property type="entry name" value="Ribosomal_uL14"/>
</dbReference>
<dbReference type="InterPro" id="IPR005745">
    <property type="entry name" value="Ribosomal_uL14_bac-type"/>
</dbReference>
<dbReference type="InterPro" id="IPR019972">
    <property type="entry name" value="Ribosomal_uL14_CS"/>
</dbReference>
<dbReference type="InterPro" id="IPR036853">
    <property type="entry name" value="Ribosomal_uL14_sf"/>
</dbReference>
<dbReference type="NCBIfam" id="TIGR01067">
    <property type="entry name" value="rplN_bact"/>
    <property type="match status" value="1"/>
</dbReference>
<dbReference type="PANTHER" id="PTHR11761">
    <property type="entry name" value="50S/60S RIBOSOMAL PROTEIN L14/L23"/>
    <property type="match status" value="1"/>
</dbReference>
<dbReference type="PANTHER" id="PTHR11761:SF3">
    <property type="entry name" value="LARGE RIBOSOMAL SUBUNIT PROTEIN UL14M"/>
    <property type="match status" value="1"/>
</dbReference>
<dbReference type="Pfam" id="PF00238">
    <property type="entry name" value="Ribosomal_L14"/>
    <property type="match status" value="1"/>
</dbReference>
<dbReference type="SMART" id="SM01374">
    <property type="entry name" value="Ribosomal_L14"/>
    <property type="match status" value="1"/>
</dbReference>
<dbReference type="SUPFAM" id="SSF50193">
    <property type="entry name" value="Ribosomal protein L14"/>
    <property type="match status" value="1"/>
</dbReference>
<dbReference type="PROSITE" id="PS00049">
    <property type="entry name" value="RIBOSOMAL_L14"/>
    <property type="match status" value="1"/>
</dbReference>
<organism>
    <name type="scientific">Leuconostoc mesenteroides subsp. mesenteroides (strain ATCC 8293 / DSM 20343 / BCRC 11652 / CCM 1803 / JCM 6124 / NCDO 523 / NBRC 100496 / NCIMB 8023 / NCTC 12954 / NRRL B-1118 / 37Y)</name>
    <dbReference type="NCBI Taxonomy" id="203120"/>
    <lineage>
        <taxon>Bacteria</taxon>
        <taxon>Bacillati</taxon>
        <taxon>Bacillota</taxon>
        <taxon>Bacilli</taxon>
        <taxon>Lactobacillales</taxon>
        <taxon>Lactobacillaceae</taxon>
        <taxon>Leuconostoc</taxon>
    </lineage>
</organism>
<name>RL14_LEUMM</name>
<comment type="function">
    <text evidence="1">Binds to 23S rRNA. Forms part of two intersubunit bridges in the 70S ribosome.</text>
</comment>
<comment type="subunit">
    <text evidence="1">Part of the 50S ribosomal subunit. Forms a cluster with proteins L3 and L19. In the 70S ribosome, L14 and L19 interact and together make contacts with the 16S rRNA in bridges B5 and B8.</text>
</comment>
<comment type="similarity">
    <text evidence="1">Belongs to the universal ribosomal protein uL14 family.</text>
</comment>
<gene>
    <name evidence="1" type="primary">rplN</name>
    <name type="ordered locus">LEUM_0206</name>
</gene>
<sequence>MIQQESRLKVADNSGAREILTIKVLGGSGRKFAGVGDMIVATVKQAIPGGNVKKGDVIKAVIVRTVSDVRRADGSYINFDENAAVIVKDDKSPVGTRIFGPVARELRDNDYMRIVSLAPEVL</sequence>
<proteinExistence type="inferred from homology"/>
<keyword id="KW-1185">Reference proteome</keyword>
<keyword id="KW-0687">Ribonucleoprotein</keyword>
<keyword id="KW-0689">Ribosomal protein</keyword>
<keyword id="KW-0694">RNA-binding</keyword>
<keyword id="KW-0699">rRNA-binding</keyword>